<name>CINAL_CHLCH</name>
<evidence type="ECO:0000255" key="1">
    <source>
        <dbReference type="HAMAP-Rule" id="MF_00226"/>
    </source>
</evidence>
<comment type="similarity">
    <text evidence="1">Belongs to the CinA family.</text>
</comment>
<protein>
    <recommendedName>
        <fullName evidence="1">CinA-like protein</fullName>
    </recommendedName>
</protein>
<feature type="chain" id="PRO_1000071770" description="CinA-like protein">
    <location>
        <begin position="1"/>
        <end position="423"/>
    </location>
</feature>
<organism>
    <name type="scientific">Chlorobium chlorochromatii (strain CaD3)</name>
    <dbReference type="NCBI Taxonomy" id="340177"/>
    <lineage>
        <taxon>Bacteria</taxon>
        <taxon>Pseudomonadati</taxon>
        <taxon>Chlorobiota</taxon>
        <taxon>Chlorobiia</taxon>
        <taxon>Chlorobiales</taxon>
        <taxon>Chlorobiaceae</taxon>
        <taxon>Chlorobium/Pelodictyon group</taxon>
        <taxon>Chlorobium</taxon>
    </lineage>
</organism>
<reference key="1">
    <citation type="submission" date="2005-08" db="EMBL/GenBank/DDBJ databases">
        <title>Complete sequence of Chlorobium chlorochromatii CaD3.</title>
        <authorList>
            <consortium name="US DOE Joint Genome Institute"/>
            <person name="Copeland A."/>
            <person name="Lucas S."/>
            <person name="Lapidus A."/>
            <person name="Barry K."/>
            <person name="Detter J.C."/>
            <person name="Glavina T."/>
            <person name="Hammon N."/>
            <person name="Israni S."/>
            <person name="Pitluck S."/>
            <person name="Bryant D."/>
            <person name="Schmutz J."/>
            <person name="Larimer F."/>
            <person name="Land M."/>
            <person name="Kyrpides N."/>
            <person name="Ivanova N."/>
            <person name="Richardson P."/>
        </authorList>
    </citation>
    <scope>NUCLEOTIDE SEQUENCE [LARGE SCALE GENOMIC DNA]</scope>
    <source>
        <strain>CaD3</strain>
    </source>
</reference>
<gene>
    <name type="ordered locus">Cag_0143</name>
</gene>
<sequence>MRAEIISVGDELLRGQRVNTNAAVIARMLSAIGVSVSHIVACSDDEADIMATCSAALGRAEVVLVTGGLGPTRDDRTKHAIQQLLGRGTVLDEASYRRIEERMAARGSAVTPLLREQAVVIEGSHVIINSRGTAAGMLLDCGEPFAHHHLILMPGVPVEMEAMMHEGVIPFLTSLSNSVICQTPLKIVGVGETAIAAMLVEIEDAMPPATMLAYLPHTAGVDLMVSSRGNSREAVEAEHQQVVDAIMERVGTLVYATREISLEEVIGEMLLRQTFTVAVAESCTGGLLASRFTDISGASTYFQQGFVVYSNEAKERALGVPHETLVAHGAVSEEVAQGMALGCLEKSGADFALATTGIAGPTGGTPEKPLGTLCYAIAVKGGGVVVCRKVVMQGTREQRKVRFSTAVLREFWMLLKEREASEE</sequence>
<proteinExistence type="inferred from homology"/>
<dbReference type="EMBL" id="CP000108">
    <property type="protein sequence ID" value="ABB27421.1"/>
    <property type="molecule type" value="Genomic_DNA"/>
</dbReference>
<dbReference type="SMR" id="Q3AUA4"/>
<dbReference type="STRING" id="340177.Cag_0143"/>
<dbReference type="KEGG" id="cch:Cag_0143"/>
<dbReference type="eggNOG" id="COG1058">
    <property type="taxonomic scope" value="Bacteria"/>
</dbReference>
<dbReference type="eggNOG" id="COG1546">
    <property type="taxonomic scope" value="Bacteria"/>
</dbReference>
<dbReference type="HOGENOM" id="CLU_030805_9_2_10"/>
<dbReference type="OrthoDB" id="9801454at2"/>
<dbReference type="CDD" id="cd00885">
    <property type="entry name" value="cinA"/>
    <property type="match status" value="1"/>
</dbReference>
<dbReference type="Gene3D" id="3.30.70.2860">
    <property type="match status" value="1"/>
</dbReference>
<dbReference type="Gene3D" id="3.90.950.20">
    <property type="entry name" value="CinA-like"/>
    <property type="match status" value="1"/>
</dbReference>
<dbReference type="Gene3D" id="3.40.980.10">
    <property type="entry name" value="MoaB/Mog-like domain"/>
    <property type="match status" value="1"/>
</dbReference>
<dbReference type="HAMAP" id="MF_00226_B">
    <property type="entry name" value="CinA_B"/>
    <property type="match status" value="1"/>
</dbReference>
<dbReference type="InterPro" id="IPR050101">
    <property type="entry name" value="CinA"/>
</dbReference>
<dbReference type="InterPro" id="IPR036653">
    <property type="entry name" value="CinA-like_C"/>
</dbReference>
<dbReference type="InterPro" id="IPR008136">
    <property type="entry name" value="CinA_C"/>
</dbReference>
<dbReference type="InterPro" id="IPR041424">
    <property type="entry name" value="CinA_KH"/>
</dbReference>
<dbReference type="InterPro" id="IPR008135">
    <property type="entry name" value="Competence-induced_CinA"/>
</dbReference>
<dbReference type="InterPro" id="IPR036425">
    <property type="entry name" value="MoaB/Mog-like_dom_sf"/>
</dbReference>
<dbReference type="InterPro" id="IPR001453">
    <property type="entry name" value="MoaB/Mog_dom"/>
</dbReference>
<dbReference type="NCBIfam" id="TIGR00200">
    <property type="entry name" value="cinA_nterm"/>
    <property type="match status" value="1"/>
</dbReference>
<dbReference type="NCBIfam" id="TIGR00199">
    <property type="entry name" value="PncC_domain"/>
    <property type="match status" value="1"/>
</dbReference>
<dbReference type="PANTHER" id="PTHR13939">
    <property type="entry name" value="NICOTINAMIDE-NUCLEOTIDE AMIDOHYDROLASE PNCC"/>
    <property type="match status" value="1"/>
</dbReference>
<dbReference type="PANTHER" id="PTHR13939:SF0">
    <property type="entry name" value="NMN AMIDOHYDROLASE-LIKE PROTEIN YFAY"/>
    <property type="match status" value="1"/>
</dbReference>
<dbReference type="Pfam" id="PF02464">
    <property type="entry name" value="CinA"/>
    <property type="match status" value="1"/>
</dbReference>
<dbReference type="Pfam" id="PF18146">
    <property type="entry name" value="CinA_KH"/>
    <property type="match status" value="1"/>
</dbReference>
<dbReference type="Pfam" id="PF00994">
    <property type="entry name" value="MoCF_biosynth"/>
    <property type="match status" value="1"/>
</dbReference>
<dbReference type="PIRSF" id="PIRSF006728">
    <property type="entry name" value="CinA"/>
    <property type="match status" value="1"/>
</dbReference>
<dbReference type="SMART" id="SM00852">
    <property type="entry name" value="MoCF_biosynth"/>
    <property type="match status" value="1"/>
</dbReference>
<dbReference type="SUPFAM" id="SSF142433">
    <property type="entry name" value="CinA-like"/>
    <property type="match status" value="1"/>
</dbReference>
<dbReference type="SUPFAM" id="SSF53218">
    <property type="entry name" value="Molybdenum cofactor biosynthesis proteins"/>
    <property type="match status" value="1"/>
</dbReference>
<accession>Q3AUA4</accession>